<keyword id="KW-0687">Ribonucleoprotein</keyword>
<keyword id="KW-0689">Ribosomal protein</keyword>
<proteinExistence type="inferred from homology"/>
<feature type="chain" id="PRO_1000003967" description="Small ribosomal subunit protein uS2">
    <location>
        <begin position="1"/>
        <end position="235"/>
    </location>
</feature>
<sequence length="235" mass="26692">MSVISMKQLLEAGVHFGHQTRRWNPKMKKYIFTERNGIYIIDLQKTVKKVEEAYNFVRELAGNGGKILFVGTKKQAQESVKEEAERCGMFYVNQRWLGGTLTNFATIQKRIKRLREIEKMEEDGVFDVLPKKEVIGLKKEKERLEKFLGGIKDMKELPDALFVIDPRKERIAVAEARKLNIPIIGIVDTNCDPDEIDYVIPANDDAIRAVKLLTSKIADAVLEAKQGEEAAVAAE</sequence>
<gene>
    <name evidence="1" type="primary">rpsB</name>
    <name type="ordered locus">GTNG_1103</name>
</gene>
<organism>
    <name type="scientific">Geobacillus thermodenitrificans (strain NG80-2)</name>
    <dbReference type="NCBI Taxonomy" id="420246"/>
    <lineage>
        <taxon>Bacteria</taxon>
        <taxon>Bacillati</taxon>
        <taxon>Bacillota</taxon>
        <taxon>Bacilli</taxon>
        <taxon>Bacillales</taxon>
        <taxon>Anoxybacillaceae</taxon>
        <taxon>Geobacillus</taxon>
    </lineage>
</organism>
<protein>
    <recommendedName>
        <fullName evidence="1">Small ribosomal subunit protein uS2</fullName>
    </recommendedName>
    <alternativeName>
        <fullName evidence="2">30S ribosomal protein S2</fullName>
    </alternativeName>
</protein>
<name>RS2_GEOTN</name>
<reference key="1">
    <citation type="journal article" date="2007" name="Proc. Natl. Acad. Sci. U.S.A.">
        <title>Genome and proteome of long-chain alkane degrading Geobacillus thermodenitrificans NG80-2 isolated from a deep-subsurface oil reservoir.</title>
        <authorList>
            <person name="Feng L."/>
            <person name="Wang W."/>
            <person name="Cheng J."/>
            <person name="Ren Y."/>
            <person name="Zhao G."/>
            <person name="Gao C."/>
            <person name="Tang Y."/>
            <person name="Liu X."/>
            <person name="Han W."/>
            <person name="Peng X."/>
            <person name="Liu R."/>
            <person name="Wang L."/>
        </authorList>
    </citation>
    <scope>NUCLEOTIDE SEQUENCE [LARGE SCALE GENOMIC DNA]</scope>
    <source>
        <strain>NG80-2</strain>
    </source>
</reference>
<accession>A4IMC3</accession>
<dbReference type="EMBL" id="CP000557">
    <property type="protein sequence ID" value="ABO66477.1"/>
    <property type="molecule type" value="Genomic_DNA"/>
</dbReference>
<dbReference type="RefSeq" id="WP_011887147.1">
    <property type="nucleotide sequence ID" value="NC_009328.1"/>
</dbReference>
<dbReference type="SMR" id="A4IMC3"/>
<dbReference type="GeneID" id="87621305"/>
<dbReference type="KEGG" id="gtn:GTNG_1103"/>
<dbReference type="eggNOG" id="COG0052">
    <property type="taxonomic scope" value="Bacteria"/>
</dbReference>
<dbReference type="HOGENOM" id="CLU_040318_1_2_9"/>
<dbReference type="Proteomes" id="UP000001578">
    <property type="component" value="Chromosome"/>
</dbReference>
<dbReference type="GO" id="GO:0022627">
    <property type="term" value="C:cytosolic small ribosomal subunit"/>
    <property type="evidence" value="ECO:0007669"/>
    <property type="project" value="TreeGrafter"/>
</dbReference>
<dbReference type="GO" id="GO:0003735">
    <property type="term" value="F:structural constituent of ribosome"/>
    <property type="evidence" value="ECO:0007669"/>
    <property type="project" value="InterPro"/>
</dbReference>
<dbReference type="GO" id="GO:0006412">
    <property type="term" value="P:translation"/>
    <property type="evidence" value="ECO:0007669"/>
    <property type="project" value="UniProtKB-UniRule"/>
</dbReference>
<dbReference type="CDD" id="cd01425">
    <property type="entry name" value="RPS2"/>
    <property type="match status" value="1"/>
</dbReference>
<dbReference type="FunFam" id="1.10.287.610:FF:000001">
    <property type="entry name" value="30S ribosomal protein S2"/>
    <property type="match status" value="1"/>
</dbReference>
<dbReference type="Gene3D" id="3.40.50.10490">
    <property type="entry name" value="Glucose-6-phosphate isomerase like protein, domain 1"/>
    <property type="match status" value="1"/>
</dbReference>
<dbReference type="Gene3D" id="1.10.287.610">
    <property type="entry name" value="Helix hairpin bin"/>
    <property type="match status" value="1"/>
</dbReference>
<dbReference type="HAMAP" id="MF_00291_B">
    <property type="entry name" value="Ribosomal_uS2_B"/>
    <property type="match status" value="1"/>
</dbReference>
<dbReference type="InterPro" id="IPR001865">
    <property type="entry name" value="Ribosomal_uS2"/>
</dbReference>
<dbReference type="InterPro" id="IPR005706">
    <property type="entry name" value="Ribosomal_uS2_bac/mit/plastid"/>
</dbReference>
<dbReference type="InterPro" id="IPR018130">
    <property type="entry name" value="Ribosomal_uS2_CS"/>
</dbReference>
<dbReference type="InterPro" id="IPR023591">
    <property type="entry name" value="Ribosomal_uS2_flav_dom_sf"/>
</dbReference>
<dbReference type="NCBIfam" id="TIGR01011">
    <property type="entry name" value="rpsB_bact"/>
    <property type="match status" value="1"/>
</dbReference>
<dbReference type="PANTHER" id="PTHR12534">
    <property type="entry name" value="30S RIBOSOMAL PROTEIN S2 PROKARYOTIC AND ORGANELLAR"/>
    <property type="match status" value="1"/>
</dbReference>
<dbReference type="PANTHER" id="PTHR12534:SF0">
    <property type="entry name" value="SMALL RIBOSOMAL SUBUNIT PROTEIN US2M"/>
    <property type="match status" value="1"/>
</dbReference>
<dbReference type="Pfam" id="PF00318">
    <property type="entry name" value="Ribosomal_S2"/>
    <property type="match status" value="1"/>
</dbReference>
<dbReference type="PRINTS" id="PR00395">
    <property type="entry name" value="RIBOSOMALS2"/>
</dbReference>
<dbReference type="SUPFAM" id="SSF52313">
    <property type="entry name" value="Ribosomal protein S2"/>
    <property type="match status" value="1"/>
</dbReference>
<dbReference type="PROSITE" id="PS00962">
    <property type="entry name" value="RIBOSOMAL_S2_1"/>
    <property type="match status" value="1"/>
</dbReference>
<dbReference type="PROSITE" id="PS00963">
    <property type="entry name" value="RIBOSOMAL_S2_2"/>
    <property type="match status" value="1"/>
</dbReference>
<evidence type="ECO:0000255" key="1">
    <source>
        <dbReference type="HAMAP-Rule" id="MF_00291"/>
    </source>
</evidence>
<evidence type="ECO:0000305" key="2"/>
<comment type="similarity">
    <text evidence="1">Belongs to the universal ribosomal protein uS2 family.</text>
</comment>